<name>NR6A1_HUMAN</name>
<sequence length="480" mass="54383">MERDEPPPSGGGGGGGSAGFLEPPAALPPPPRNGFCQDELAELDPGTISVSDDRAEQRTCLICGDRATGLHYGIISCEGCKGFFKRSICNKRVYRCSRDKNCVMSRKQRNRCQYCRLLKCLQMGMNRKAIREDGMPGGRNKSIGPVQISEEEIERIMSGQEFEEEANHWSNHGDSDHSSPGNRASESNQPSPGSTLSSSRSVELNGFMAFREQYMGMSVPPHYQYIPHLFSYSGHSPLLPQQARSLDPQSYSLIHQLLSAEDLEPLGTPMLIEDGYAVTQAELFALLCRLADELLFRQIAWIKKLPFFCELSIKDYTCLLSSTWQELILLSSLTVYSKQIFGELADVTAKYSPSDEELHRFSDEGMEVIERLIYLYHKFHQLKVSNEEYACMKAINFLNQDIRGLTSASQLEQLNKRYWYICQDFTEYKYTHQPNRFPDLMMCLPEIRYIAGKMVNVPLEQLPLLFKVVLHSCKTSVGKE</sequence>
<dbReference type="EMBL" id="S83309">
    <property type="protein sequence ID" value="AAB50876.1"/>
    <property type="molecule type" value="mRNA"/>
</dbReference>
<dbReference type="EMBL" id="U80802">
    <property type="protein sequence ID" value="AAB96828.1"/>
    <property type="molecule type" value="mRNA"/>
</dbReference>
<dbReference type="EMBL" id="U64876">
    <property type="protein sequence ID" value="AAB06335.1"/>
    <property type="molecule type" value="mRNA"/>
</dbReference>
<dbReference type="EMBL" id="AF004291">
    <property type="protein sequence ID" value="AAC52054.1"/>
    <property type="molecule type" value="mRNA"/>
</dbReference>
<dbReference type="EMBL" id="X99975">
    <property type="protein sequence ID" value="CAA68236.1"/>
    <property type="molecule type" value="mRNA"/>
</dbReference>
<dbReference type="EMBL" id="AL158075">
    <property type="status" value="NOT_ANNOTATED_CDS"/>
    <property type="molecule type" value="Genomic_DNA"/>
</dbReference>
<dbReference type="EMBL" id="AL354928">
    <property type="status" value="NOT_ANNOTATED_CDS"/>
    <property type="molecule type" value="Genomic_DNA"/>
</dbReference>
<dbReference type="EMBL" id="AL354979">
    <property type="status" value="NOT_ANNOTATED_CDS"/>
    <property type="molecule type" value="Genomic_DNA"/>
</dbReference>
<dbReference type="EMBL" id="BC030600">
    <property type="protein sequence ID" value="AAH30600.1"/>
    <property type="molecule type" value="mRNA"/>
</dbReference>
<dbReference type="CCDS" id="CCDS35137.1">
    <molecule id="Q15406-1"/>
</dbReference>
<dbReference type="CCDS" id="CCDS55340.1">
    <molecule id="Q15406-5"/>
</dbReference>
<dbReference type="CCDS" id="CCDS65127.1">
    <molecule id="Q15406-2"/>
</dbReference>
<dbReference type="CCDS" id="CCDS94481.1">
    <molecule id="Q15406-4"/>
</dbReference>
<dbReference type="RefSeq" id="NP_001265475.1">
    <molecule id="Q15406-2"/>
    <property type="nucleotide sequence ID" value="NM_001278546.2"/>
</dbReference>
<dbReference type="RefSeq" id="NP_001397925.1">
    <molecule id="Q15406-4"/>
    <property type="nucleotide sequence ID" value="NM_001410996.1"/>
</dbReference>
<dbReference type="RefSeq" id="NP_001480.3">
    <molecule id="Q15406-5"/>
    <property type="nucleotide sequence ID" value="NM_001489.4"/>
</dbReference>
<dbReference type="RefSeq" id="NP_201591.2">
    <molecule id="Q15406-1"/>
    <property type="nucleotide sequence ID" value="NM_033334.3"/>
</dbReference>
<dbReference type="RefSeq" id="XP_005251974.1">
    <property type="nucleotide sequence ID" value="XM_005251917.4"/>
</dbReference>
<dbReference type="SMR" id="Q15406"/>
<dbReference type="BioGRID" id="108919">
    <property type="interactions" value="7"/>
</dbReference>
<dbReference type="FunCoup" id="Q15406">
    <property type="interactions" value="941"/>
</dbReference>
<dbReference type="IntAct" id="Q15406">
    <property type="interactions" value="3"/>
</dbReference>
<dbReference type="STRING" id="9606.ENSP00000420267"/>
<dbReference type="BindingDB" id="Q15406"/>
<dbReference type="ChEMBL" id="CHEMBL1961793"/>
<dbReference type="GlyGen" id="Q15406">
    <property type="glycosylation" value="1 site"/>
</dbReference>
<dbReference type="iPTMnet" id="Q15406"/>
<dbReference type="PhosphoSitePlus" id="Q15406"/>
<dbReference type="BioMuta" id="NR6A1"/>
<dbReference type="DMDM" id="12643728"/>
<dbReference type="jPOST" id="Q15406"/>
<dbReference type="MassIVE" id="Q15406"/>
<dbReference type="PaxDb" id="9606-ENSP00000420267"/>
<dbReference type="PeptideAtlas" id="Q15406"/>
<dbReference type="ProteomicsDB" id="60572">
    <molecule id="Q15406-1"/>
</dbReference>
<dbReference type="ProteomicsDB" id="60573">
    <molecule id="Q15406-2"/>
</dbReference>
<dbReference type="ProteomicsDB" id="60574">
    <molecule id="Q15406-3"/>
</dbReference>
<dbReference type="ProteomicsDB" id="60575">
    <molecule id="Q15406-4"/>
</dbReference>
<dbReference type="ProteomicsDB" id="60576">
    <molecule id="Q15406-5"/>
</dbReference>
<dbReference type="Antibodypedia" id="16337">
    <property type="antibodies" value="333 antibodies from 34 providers"/>
</dbReference>
<dbReference type="DNASU" id="2649"/>
<dbReference type="Ensembl" id="ENST00000344523.8">
    <molecule id="Q15406-4"/>
    <property type="protein sequence ID" value="ENSP00000341135.4"/>
    <property type="gene ID" value="ENSG00000148200.17"/>
</dbReference>
<dbReference type="Ensembl" id="ENST00000373584.7">
    <molecule id="Q15406-2"/>
    <property type="protein sequence ID" value="ENSP00000362686.3"/>
    <property type="gene ID" value="ENSG00000148200.17"/>
</dbReference>
<dbReference type="Ensembl" id="ENST00000416460.6">
    <molecule id="Q15406-5"/>
    <property type="protein sequence ID" value="ENSP00000413701.2"/>
    <property type="gene ID" value="ENSG00000148200.17"/>
</dbReference>
<dbReference type="Ensembl" id="ENST00000487099.7">
    <molecule id="Q15406-1"/>
    <property type="protein sequence ID" value="ENSP00000420267.1"/>
    <property type="gene ID" value="ENSG00000148200.17"/>
</dbReference>
<dbReference type="GeneID" id="2649"/>
<dbReference type="KEGG" id="hsa:2649"/>
<dbReference type="MANE-Select" id="ENST00000487099.7">
    <property type="protein sequence ID" value="ENSP00000420267.1"/>
    <property type="RefSeq nucleotide sequence ID" value="NM_033334.4"/>
    <property type="RefSeq protein sequence ID" value="NP_201591.2"/>
</dbReference>
<dbReference type="UCSC" id="uc004boq.3">
    <molecule id="Q15406-1"/>
    <property type="organism name" value="human"/>
</dbReference>
<dbReference type="AGR" id="HGNC:7985"/>
<dbReference type="CTD" id="2649"/>
<dbReference type="DisGeNET" id="2649"/>
<dbReference type="GeneCards" id="NR6A1"/>
<dbReference type="HGNC" id="HGNC:7985">
    <property type="gene designation" value="NR6A1"/>
</dbReference>
<dbReference type="HPA" id="ENSG00000148200">
    <property type="expression patterns" value="Tissue enriched (testis)"/>
</dbReference>
<dbReference type="MIM" id="602778">
    <property type="type" value="gene"/>
</dbReference>
<dbReference type="neXtProt" id="NX_Q15406"/>
<dbReference type="OpenTargets" id="ENSG00000148200"/>
<dbReference type="PharmGKB" id="PA31766"/>
<dbReference type="VEuPathDB" id="HostDB:ENSG00000148200"/>
<dbReference type="eggNOG" id="KOG3575">
    <property type="taxonomic scope" value="Eukaryota"/>
</dbReference>
<dbReference type="GeneTree" id="ENSGT00940000157936"/>
<dbReference type="HOGENOM" id="CLU_007368_6_1_1"/>
<dbReference type="InParanoid" id="Q15406"/>
<dbReference type="OMA" id="GYYACSV"/>
<dbReference type="OrthoDB" id="10006908at2759"/>
<dbReference type="PAN-GO" id="Q15406">
    <property type="GO annotations" value="3 GO annotations based on evolutionary models"/>
</dbReference>
<dbReference type="PhylomeDB" id="Q15406"/>
<dbReference type="TreeFam" id="TF350737"/>
<dbReference type="PathwayCommons" id="Q15406"/>
<dbReference type="Reactome" id="R-HSA-2892247">
    <molecule id="Q15406-1"/>
    <property type="pathway name" value="POU5F1 (OCT4), SOX2, NANOG activate genes related to proliferation"/>
</dbReference>
<dbReference type="Reactome" id="R-HSA-383280">
    <property type="pathway name" value="Nuclear Receptor transcription pathway"/>
</dbReference>
<dbReference type="SignaLink" id="Q15406"/>
<dbReference type="BioGRID-ORCS" id="2649">
    <property type="hits" value="13 hits in 1174 CRISPR screens"/>
</dbReference>
<dbReference type="ChiTaRS" id="NR6A1">
    <property type="organism name" value="human"/>
</dbReference>
<dbReference type="GeneWiki" id="Germ_cell_nuclear_factor"/>
<dbReference type="GenomeRNAi" id="2649"/>
<dbReference type="Pharos" id="Q15406">
    <property type="development level" value="Tbio"/>
</dbReference>
<dbReference type="PRO" id="PR:Q15406"/>
<dbReference type="Proteomes" id="UP000005640">
    <property type="component" value="Chromosome 9"/>
</dbReference>
<dbReference type="RNAct" id="Q15406">
    <property type="molecule type" value="protein"/>
</dbReference>
<dbReference type="Bgee" id="ENSG00000148200">
    <property type="expression patterns" value="Expressed in primordial germ cell in gonad and 136 other cell types or tissues"/>
</dbReference>
<dbReference type="ExpressionAtlas" id="Q15406">
    <property type="expression patterns" value="baseline and differential"/>
</dbReference>
<dbReference type="GO" id="GO:0000785">
    <property type="term" value="C:chromatin"/>
    <property type="evidence" value="ECO:0000247"/>
    <property type="project" value="NTNU_SB"/>
</dbReference>
<dbReference type="GO" id="GO:0005654">
    <property type="term" value="C:nucleoplasm"/>
    <property type="evidence" value="ECO:0000304"/>
    <property type="project" value="Reactome"/>
</dbReference>
<dbReference type="GO" id="GO:0005634">
    <property type="term" value="C:nucleus"/>
    <property type="evidence" value="ECO:0000314"/>
    <property type="project" value="UniProtKB"/>
</dbReference>
<dbReference type="GO" id="GO:0005667">
    <property type="term" value="C:transcription regulator complex"/>
    <property type="evidence" value="ECO:0000250"/>
    <property type="project" value="UniProtKB"/>
</dbReference>
<dbReference type="GO" id="GO:0003677">
    <property type="term" value="F:DNA binding"/>
    <property type="evidence" value="ECO:0000250"/>
    <property type="project" value="UniProtKB"/>
</dbReference>
<dbReference type="GO" id="GO:0001228">
    <property type="term" value="F:DNA-binding transcription activator activity, RNA polymerase II-specific"/>
    <property type="evidence" value="ECO:0007669"/>
    <property type="project" value="Ensembl"/>
</dbReference>
<dbReference type="GO" id="GO:0000981">
    <property type="term" value="F:DNA-binding transcription factor activity, RNA polymerase II-specific"/>
    <property type="evidence" value="ECO:0000247"/>
    <property type="project" value="NTNU_SB"/>
</dbReference>
<dbReference type="GO" id="GO:0001217">
    <property type="term" value="F:DNA-binding transcription repressor activity"/>
    <property type="evidence" value="ECO:0000314"/>
    <property type="project" value="UniProtKB"/>
</dbReference>
<dbReference type="GO" id="GO:0034056">
    <property type="term" value="F:estrogen response element binding"/>
    <property type="evidence" value="ECO:0000318"/>
    <property type="project" value="GO_Central"/>
</dbReference>
<dbReference type="GO" id="GO:0004879">
    <property type="term" value="F:nuclear receptor activity"/>
    <property type="evidence" value="ECO:0000318"/>
    <property type="project" value="GO_Central"/>
</dbReference>
<dbReference type="GO" id="GO:0042803">
    <property type="term" value="F:protein homodimerization activity"/>
    <property type="evidence" value="ECO:0000250"/>
    <property type="project" value="UniProtKB"/>
</dbReference>
<dbReference type="GO" id="GO:0043565">
    <property type="term" value="F:sequence-specific DNA binding"/>
    <property type="evidence" value="ECO:0000250"/>
    <property type="project" value="UniProtKB"/>
</dbReference>
<dbReference type="GO" id="GO:1990837">
    <property type="term" value="F:sequence-specific double-stranded DNA binding"/>
    <property type="evidence" value="ECO:0000314"/>
    <property type="project" value="ARUK-UCL"/>
</dbReference>
<dbReference type="GO" id="GO:0008270">
    <property type="term" value="F:zinc ion binding"/>
    <property type="evidence" value="ECO:0007669"/>
    <property type="project" value="UniProtKB-KW"/>
</dbReference>
<dbReference type="GO" id="GO:0007276">
    <property type="term" value="P:gamete generation"/>
    <property type="evidence" value="ECO:0000250"/>
    <property type="project" value="UniProtKB"/>
</dbReference>
<dbReference type="GO" id="GO:0000122">
    <property type="term" value="P:negative regulation of transcription by RNA polymerase II"/>
    <property type="evidence" value="ECO:0000250"/>
    <property type="project" value="UniProtKB"/>
</dbReference>
<dbReference type="GO" id="GO:2000741">
    <property type="term" value="P:positive regulation of mesenchymal stem cell differentiation"/>
    <property type="evidence" value="ECO:0000314"/>
    <property type="project" value="UniProtKB"/>
</dbReference>
<dbReference type="GO" id="GO:0006357">
    <property type="term" value="P:regulation of transcription by RNA polymerase II"/>
    <property type="evidence" value="ECO:0000318"/>
    <property type="project" value="GO_Central"/>
</dbReference>
<dbReference type="CDD" id="cd07169">
    <property type="entry name" value="NR_DBD_GCNF_like"/>
    <property type="match status" value="1"/>
</dbReference>
<dbReference type="CDD" id="cd06953">
    <property type="entry name" value="NR_LBD_DHR4_like"/>
    <property type="match status" value="1"/>
</dbReference>
<dbReference type="FunFam" id="3.30.50.10:FF:000006">
    <property type="entry name" value="Nuclear receptor subfamily 5 group A member"/>
    <property type="match status" value="1"/>
</dbReference>
<dbReference type="FunFam" id="1.10.565.10:FF:000015">
    <property type="entry name" value="Nuclear receptor subfamily 6 group A member 1"/>
    <property type="match status" value="1"/>
</dbReference>
<dbReference type="Gene3D" id="3.30.50.10">
    <property type="entry name" value="Erythroid Transcription Factor GATA-1, subunit A"/>
    <property type="match status" value="1"/>
</dbReference>
<dbReference type="Gene3D" id="1.10.565.10">
    <property type="entry name" value="Retinoid X Receptor"/>
    <property type="match status" value="1"/>
</dbReference>
<dbReference type="InterPro" id="IPR035500">
    <property type="entry name" value="NHR-like_dom_sf"/>
</dbReference>
<dbReference type="InterPro" id="IPR000536">
    <property type="entry name" value="Nucl_hrmn_rcpt_lig-bd"/>
</dbReference>
<dbReference type="InterPro" id="IPR050200">
    <property type="entry name" value="Nuclear_hormone_rcpt_NR3"/>
</dbReference>
<dbReference type="InterPro" id="IPR001723">
    <property type="entry name" value="Nuclear_hrmn_rcpt"/>
</dbReference>
<dbReference type="InterPro" id="IPR001628">
    <property type="entry name" value="Znf_hrmn_rcpt"/>
</dbReference>
<dbReference type="InterPro" id="IPR013088">
    <property type="entry name" value="Znf_NHR/GATA"/>
</dbReference>
<dbReference type="PANTHER" id="PTHR48092">
    <property type="entry name" value="KNIRPS-RELATED PROTEIN-RELATED"/>
    <property type="match status" value="1"/>
</dbReference>
<dbReference type="Pfam" id="PF00104">
    <property type="entry name" value="Hormone_recep"/>
    <property type="match status" value="1"/>
</dbReference>
<dbReference type="Pfam" id="PF00105">
    <property type="entry name" value="zf-C4"/>
    <property type="match status" value="1"/>
</dbReference>
<dbReference type="PRINTS" id="PR00398">
    <property type="entry name" value="STRDHORMONER"/>
</dbReference>
<dbReference type="PRINTS" id="PR00047">
    <property type="entry name" value="STROIDFINGER"/>
</dbReference>
<dbReference type="SMART" id="SM00430">
    <property type="entry name" value="HOLI"/>
    <property type="match status" value="1"/>
</dbReference>
<dbReference type="SMART" id="SM00399">
    <property type="entry name" value="ZnF_C4"/>
    <property type="match status" value="1"/>
</dbReference>
<dbReference type="SUPFAM" id="SSF57716">
    <property type="entry name" value="Glucocorticoid receptor-like (DNA-binding domain)"/>
    <property type="match status" value="1"/>
</dbReference>
<dbReference type="SUPFAM" id="SSF48508">
    <property type="entry name" value="Nuclear receptor ligand-binding domain"/>
    <property type="match status" value="1"/>
</dbReference>
<dbReference type="PROSITE" id="PS51843">
    <property type="entry name" value="NR_LBD"/>
    <property type="match status" value="1"/>
</dbReference>
<dbReference type="PROSITE" id="PS00031">
    <property type="entry name" value="NUCLEAR_REC_DBD_1"/>
    <property type="match status" value="1"/>
</dbReference>
<dbReference type="PROSITE" id="PS51030">
    <property type="entry name" value="NUCLEAR_REC_DBD_2"/>
    <property type="match status" value="1"/>
</dbReference>
<feature type="chain" id="PRO_0000053741" description="Nuclear receptor subfamily 6 group A member 1">
    <location>
        <begin position="1"/>
        <end position="480"/>
    </location>
</feature>
<feature type="domain" description="NR LBD" evidence="3">
    <location>
        <begin position="249"/>
        <end position="480"/>
    </location>
</feature>
<feature type="DNA-binding region" description="Nuclear receptor" evidence="2">
    <location>
        <begin position="57"/>
        <end position="132"/>
    </location>
</feature>
<feature type="zinc finger region" description="NR C4-type" evidence="2">
    <location>
        <begin position="60"/>
        <end position="80"/>
    </location>
</feature>
<feature type="zinc finger region" description="NR C4-type" evidence="2">
    <location>
        <begin position="96"/>
        <end position="120"/>
    </location>
</feature>
<feature type="region of interest" description="Disordered" evidence="4">
    <location>
        <begin position="1"/>
        <end position="32"/>
    </location>
</feature>
<feature type="region of interest" description="Disordered" evidence="4">
    <location>
        <begin position="131"/>
        <end position="150"/>
    </location>
</feature>
<feature type="region of interest" description="Disordered" evidence="4">
    <location>
        <begin position="162"/>
        <end position="199"/>
    </location>
</feature>
<feature type="region of interest" description="Sufficient for interaction with UIMC1" evidence="1">
    <location>
        <begin position="172"/>
        <end position="253"/>
    </location>
</feature>
<feature type="compositionally biased region" description="Basic and acidic residues" evidence="4">
    <location>
        <begin position="165"/>
        <end position="177"/>
    </location>
</feature>
<feature type="compositionally biased region" description="Low complexity" evidence="4">
    <location>
        <begin position="187"/>
        <end position="199"/>
    </location>
</feature>
<feature type="binding site" evidence="1">
    <location>
        <position position="60"/>
    </location>
    <ligand>
        <name>Zn(2+)</name>
        <dbReference type="ChEBI" id="CHEBI:29105"/>
        <label>1</label>
    </ligand>
</feature>
<feature type="binding site" evidence="1">
    <location>
        <position position="63"/>
    </location>
    <ligand>
        <name>Zn(2+)</name>
        <dbReference type="ChEBI" id="CHEBI:29105"/>
        <label>1</label>
    </ligand>
</feature>
<feature type="binding site" evidence="1">
    <location>
        <position position="77"/>
    </location>
    <ligand>
        <name>Zn(2+)</name>
        <dbReference type="ChEBI" id="CHEBI:29105"/>
        <label>1</label>
    </ligand>
</feature>
<feature type="binding site" evidence="1">
    <location>
        <position position="80"/>
    </location>
    <ligand>
        <name>Zn(2+)</name>
        <dbReference type="ChEBI" id="CHEBI:29105"/>
        <label>1</label>
    </ligand>
</feature>
<feature type="binding site" evidence="1">
    <location>
        <position position="96"/>
    </location>
    <ligand>
        <name>Zn(2+)</name>
        <dbReference type="ChEBI" id="CHEBI:29105"/>
        <label>2</label>
    </ligand>
</feature>
<feature type="binding site" evidence="1">
    <location>
        <position position="102"/>
    </location>
    <ligand>
        <name>Zn(2+)</name>
        <dbReference type="ChEBI" id="CHEBI:29105"/>
        <label>2</label>
    </ligand>
</feature>
<feature type="binding site" evidence="1">
    <location>
        <position position="112"/>
    </location>
    <ligand>
        <name>Zn(2+)</name>
        <dbReference type="ChEBI" id="CHEBI:29105"/>
        <label>2</label>
    </ligand>
</feature>
<feature type="binding site" evidence="1">
    <location>
        <position position="115"/>
    </location>
    <ligand>
        <name>Zn(2+)</name>
        <dbReference type="ChEBI" id="CHEBI:29105"/>
        <label>2</label>
    </ligand>
</feature>
<feature type="splice variant" id="VSP_003720" description="In isoform 3." evidence="16">
    <location>
        <begin position="9"/>
        <end position="30"/>
    </location>
</feature>
<feature type="splice variant" id="VSP_003721" description="In isoform 2, isoform 3 and isoform 5." evidence="12 14 16">
    <original>ISVSD</original>
    <variation>N</variation>
    <location>
        <begin position="48"/>
        <end position="52"/>
    </location>
</feature>
<feature type="splice variant" id="VSP_025927" description="In isoform 4 and isoform 5." evidence="12 15">
    <location>
        <position position="199"/>
    </location>
</feature>
<feature type="sequence conflict" description="In Ref. 3; AAB06335." evidence="17" ref="3">
    <original>N</original>
    <variation>K</variation>
    <location>
        <position position="90"/>
    </location>
</feature>
<feature type="sequence conflict" description="In Ref. 5; CAA68236." evidence="17" ref="5">
    <original>A</original>
    <variation>T</variation>
    <location>
        <position position="129"/>
    </location>
</feature>
<comment type="function">
    <text evidence="1 6">Orphan nuclear receptor that binds to a response element containing the sequence 5'-TCAAGGTCA-3' (PubMed:26769970). Acts as a regulator of embryonic stem cell pluripotency by mediating repression of POU5F1/OCT4: binds to the DR0 element within the POU5F1/OCT4 promoter and inhibits POU5F1/OCT4 expression during embryonic stem cell differentiation (PubMed:26769970). Involved in the regulation of gene expression in germ cell development during gametogenesis (By similarity).</text>
</comment>
<comment type="subunit">
    <text evidence="1 5">Homodimer (By similarity). Interacts with UIMC1 (PubMed:12080054).</text>
</comment>
<comment type="subcellular location">
    <subcellularLocation>
        <location evidence="6">Nucleus</location>
    </subcellularLocation>
</comment>
<comment type="alternative products">
    <event type="alternative splicing"/>
    <isoform>
        <id>Q15406-1</id>
        <name>1</name>
        <sequence type="displayed"/>
    </isoform>
    <isoform>
        <id>Q15406-2</id>
        <name>2</name>
        <sequence type="described" ref="VSP_003721"/>
    </isoform>
    <isoform>
        <id>Q15406-3</id>
        <name>3</name>
        <sequence type="described" ref="VSP_003720 VSP_003721"/>
    </isoform>
    <isoform>
        <id>Q15406-4</id>
        <name>4</name>
        <sequence type="described" ref="VSP_025927"/>
    </isoform>
    <isoform>
        <id>Q15406-5</id>
        <name>5</name>
        <sequence type="described" ref="VSP_003721 VSP_025927"/>
    </isoform>
</comment>
<comment type="tissue specificity">
    <text evidence="7 8 9 10 11">Shows highest expression in the germ cells of the adult testis.</text>
</comment>
<comment type="similarity">
    <text evidence="17">Belongs to the nuclear hormone receptor family. NR6 subfamily.</text>
</comment>
<proteinExistence type="evidence at protein level"/>
<reference key="1">
    <citation type="journal article" date="1996" name="Biochim. Biophys. Acta">
        <title>Characterization of the human germ cell nuclear factor gene.</title>
        <authorList>
            <person name="Suesens U."/>
            <person name="Borgmeyer U."/>
        </authorList>
    </citation>
    <scope>NUCLEOTIDE SEQUENCE [MRNA] (ISOFORM 2)</scope>
    <scope>TISSUE SPECIFICITY</scope>
    <source>
        <tissue>Embryonic carcinoma</tissue>
    </source>
</reference>
<reference key="2">
    <citation type="journal article" date="1997" name="Biochim. Biophys. Acta">
        <title>cDNA cloning of two closely related forms of human germ cell nuclear factor (GCNF).</title>
        <authorList>
            <person name="Kapelle M."/>
            <person name="Kraetzschmar J."/>
            <person name="Husemann M."/>
            <person name="Schleuning W.-D."/>
        </authorList>
    </citation>
    <scope>NUCLEOTIDE SEQUENCE [MRNA] (ISOFORMS 1 AND 4)</scope>
    <scope>ALTERNATIVE SPLICING</scope>
    <scope>TISSUE SPECIFICITY</scope>
    <source>
        <tissue>Testis</tissue>
    </source>
</reference>
<reference key="3">
    <citation type="journal article" date="1997" name="J. Mol. Endocrinol.">
        <title>Cloning of the human orphan receptor germ cell nuclear factor/retinoid receptor-related testis-associated receptor and its differential regulation during embryonal carcinoma cell differentiation.</title>
        <authorList>
            <person name="Lei W."/>
            <person name="Hirose T."/>
            <person name="Zhang L.-X."/>
            <person name="Adachi H."/>
            <person name="Spinella M.J."/>
            <person name="Dmitrovsky E."/>
            <person name="Jetten A.M."/>
        </authorList>
    </citation>
    <scope>NUCLEOTIDE SEQUENCE [MRNA] (ISOFORM 1)</scope>
    <scope>TISSUE SPECIFICITY</scope>
    <source>
        <tissue>Testis</tissue>
    </source>
</reference>
<reference key="4">
    <citation type="journal article" date="1998" name="FEBS Lett.">
        <title>Cloning, expression analysis and chromosomal localization of the human nuclear receptor gene GCNF.</title>
        <authorList>
            <person name="Agoulnik I.Y."/>
            <person name="Cho Y."/>
            <person name="Niederberger C."/>
            <person name="Kieback D.G."/>
            <person name="Cooney A.J."/>
        </authorList>
    </citation>
    <scope>NUCLEOTIDE SEQUENCE [MRNA] (ISOFORM 3)</scope>
    <scope>TISSUE SPECIFICITY</scope>
    <source>
        <tissue>Testis</tissue>
    </source>
</reference>
<reference key="5">
    <citation type="journal article" date="1998" name="J. Recept. Signal Transduct.">
        <title>Cloning of the human NCNF gene.</title>
        <authorList>
            <person name="Schneider-Hirsch S."/>
            <person name="Bauer U.M."/>
            <person name="Heiermann R."/>
            <person name="Rentrop M."/>
            <person name="Maelicke A."/>
        </authorList>
    </citation>
    <scope>NUCLEOTIDE SEQUENCE [MRNA] (ISOFORM 1)</scope>
    <scope>TISSUE SPECIFICITY</scope>
</reference>
<reference key="6">
    <citation type="journal article" date="2004" name="Nature">
        <title>DNA sequence and analysis of human chromosome 9.</title>
        <authorList>
            <person name="Humphray S.J."/>
            <person name="Oliver K."/>
            <person name="Hunt A.R."/>
            <person name="Plumb R.W."/>
            <person name="Loveland J.E."/>
            <person name="Howe K.L."/>
            <person name="Andrews T.D."/>
            <person name="Searle S."/>
            <person name="Hunt S.E."/>
            <person name="Scott C.E."/>
            <person name="Jones M.C."/>
            <person name="Ainscough R."/>
            <person name="Almeida J.P."/>
            <person name="Ambrose K.D."/>
            <person name="Ashwell R.I.S."/>
            <person name="Babbage A.K."/>
            <person name="Babbage S."/>
            <person name="Bagguley C.L."/>
            <person name="Bailey J."/>
            <person name="Banerjee R."/>
            <person name="Barker D.J."/>
            <person name="Barlow K.F."/>
            <person name="Bates K."/>
            <person name="Beasley H."/>
            <person name="Beasley O."/>
            <person name="Bird C.P."/>
            <person name="Bray-Allen S."/>
            <person name="Brown A.J."/>
            <person name="Brown J.Y."/>
            <person name="Burford D."/>
            <person name="Burrill W."/>
            <person name="Burton J."/>
            <person name="Carder C."/>
            <person name="Carter N.P."/>
            <person name="Chapman J.C."/>
            <person name="Chen Y."/>
            <person name="Clarke G."/>
            <person name="Clark S.Y."/>
            <person name="Clee C.M."/>
            <person name="Clegg S."/>
            <person name="Collier R.E."/>
            <person name="Corby N."/>
            <person name="Crosier M."/>
            <person name="Cummings A.T."/>
            <person name="Davies J."/>
            <person name="Dhami P."/>
            <person name="Dunn M."/>
            <person name="Dutta I."/>
            <person name="Dyer L.W."/>
            <person name="Earthrowl M.E."/>
            <person name="Faulkner L."/>
            <person name="Fleming C.J."/>
            <person name="Frankish A."/>
            <person name="Frankland J.A."/>
            <person name="French L."/>
            <person name="Fricker D.G."/>
            <person name="Garner P."/>
            <person name="Garnett J."/>
            <person name="Ghori J."/>
            <person name="Gilbert J.G.R."/>
            <person name="Glison C."/>
            <person name="Grafham D.V."/>
            <person name="Gribble S."/>
            <person name="Griffiths C."/>
            <person name="Griffiths-Jones S."/>
            <person name="Grocock R."/>
            <person name="Guy J."/>
            <person name="Hall R.E."/>
            <person name="Hammond S."/>
            <person name="Harley J.L."/>
            <person name="Harrison E.S.I."/>
            <person name="Hart E.A."/>
            <person name="Heath P.D."/>
            <person name="Henderson C.D."/>
            <person name="Hopkins B.L."/>
            <person name="Howard P.J."/>
            <person name="Howden P.J."/>
            <person name="Huckle E."/>
            <person name="Johnson C."/>
            <person name="Johnson D."/>
            <person name="Joy A.A."/>
            <person name="Kay M."/>
            <person name="Keenan S."/>
            <person name="Kershaw J.K."/>
            <person name="Kimberley A.M."/>
            <person name="King A."/>
            <person name="Knights A."/>
            <person name="Laird G.K."/>
            <person name="Langford C."/>
            <person name="Lawlor S."/>
            <person name="Leongamornlert D.A."/>
            <person name="Leversha M."/>
            <person name="Lloyd C."/>
            <person name="Lloyd D.M."/>
            <person name="Lovell J."/>
            <person name="Martin S."/>
            <person name="Mashreghi-Mohammadi M."/>
            <person name="Matthews L."/>
            <person name="McLaren S."/>
            <person name="McLay K.E."/>
            <person name="McMurray A."/>
            <person name="Milne S."/>
            <person name="Nickerson T."/>
            <person name="Nisbett J."/>
            <person name="Nordsiek G."/>
            <person name="Pearce A.V."/>
            <person name="Peck A.I."/>
            <person name="Porter K.M."/>
            <person name="Pandian R."/>
            <person name="Pelan S."/>
            <person name="Phillimore B."/>
            <person name="Povey S."/>
            <person name="Ramsey Y."/>
            <person name="Rand V."/>
            <person name="Scharfe M."/>
            <person name="Sehra H.K."/>
            <person name="Shownkeen R."/>
            <person name="Sims S.K."/>
            <person name="Skuce C.D."/>
            <person name="Smith M."/>
            <person name="Steward C.A."/>
            <person name="Swarbreck D."/>
            <person name="Sycamore N."/>
            <person name="Tester J."/>
            <person name="Thorpe A."/>
            <person name="Tracey A."/>
            <person name="Tromans A."/>
            <person name="Thomas D.W."/>
            <person name="Wall M."/>
            <person name="Wallis J.M."/>
            <person name="West A.P."/>
            <person name="Whitehead S.L."/>
            <person name="Willey D.L."/>
            <person name="Williams S.A."/>
            <person name="Wilming L."/>
            <person name="Wray P.W."/>
            <person name="Young L."/>
            <person name="Ashurst J.L."/>
            <person name="Coulson A."/>
            <person name="Blocker H."/>
            <person name="Durbin R.M."/>
            <person name="Sulston J.E."/>
            <person name="Hubbard T."/>
            <person name="Jackson M.J."/>
            <person name="Bentley D.R."/>
            <person name="Beck S."/>
            <person name="Rogers J."/>
            <person name="Dunham I."/>
        </authorList>
    </citation>
    <scope>NUCLEOTIDE SEQUENCE [LARGE SCALE GENOMIC DNA]</scope>
</reference>
<reference key="7">
    <citation type="journal article" date="2004" name="Genome Res.">
        <title>The status, quality, and expansion of the NIH full-length cDNA project: the Mammalian Gene Collection (MGC).</title>
        <authorList>
            <consortium name="The MGC Project Team"/>
        </authorList>
    </citation>
    <scope>NUCLEOTIDE SEQUENCE [LARGE SCALE MRNA] (ISOFORM 5)</scope>
    <source>
        <tissue>Testis</tissue>
    </source>
</reference>
<reference key="8">
    <citation type="journal article" date="2002" name="J. Biol. Chem.">
        <title>RAP80: a novel nuclear protein that interacts with the retinoid-related testis-associated receptor.</title>
        <authorList>
            <person name="Yan Z."/>
            <person name="Kim Y.-S."/>
            <person name="Jetten A.M."/>
        </authorList>
    </citation>
    <scope>INTERACTION WITH UIMC1</scope>
</reference>
<reference key="9">
    <citation type="journal article" date="2016" name="J. Biol. Chem.">
        <title>Germ cell nuclear factor (GCNF) represses Oct4 expression and globally modulates gene expression in human embryonic stem (hES) cells.</title>
        <authorList>
            <person name="Wang H."/>
            <person name="Wang X."/>
            <person name="Xu X."/>
            <person name="Kyba M."/>
            <person name="Cooney A.J."/>
        </authorList>
    </citation>
    <scope>FUNCTION</scope>
    <scope>SUBCELLULAR LOCATION</scope>
</reference>
<evidence type="ECO:0000250" key="1">
    <source>
        <dbReference type="UniProtKB" id="Q64249"/>
    </source>
</evidence>
<evidence type="ECO:0000255" key="2">
    <source>
        <dbReference type="PROSITE-ProRule" id="PRU00407"/>
    </source>
</evidence>
<evidence type="ECO:0000255" key="3">
    <source>
        <dbReference type="PROSITE-ProRule" id="PRU01189"/>
    </source>
</evidence>
<evidence type="ECO:0000256" key="4">
    <source>
        <dbReference type="SAM" id="MobiDB-lite"/>
    </source>
</evidence>
<evidence type="ECO:0000269" key="5">
    <source>
    </source>
</evidence>
<evidence type="ECO:0000269" key="6">
    <source>
    </source>
</evidence>
<evidence type="ECO:0000269" key="7">
    <source>
    </source>
</evidence>
<evidence type="ECO:0000269" key="8">
    <source>
    </source>
</evidence>
<evidence type="ECO:0000269" key="9">
    <source>
    </source>
</evidence>
<evidence type="ECO:0000269" key="10">
    <source>
    </source>
</evidence>
<evidence type="ECO:0000269" key="11">
    <source>
    </source>
</evidence>
<evidence type="ECO:0000303" key="12">
    <source>
    </source>
</evidence>
<evidence type="ECO:0000303" key="13">
    <source>
    </source>
</evidence>
<evidence type="ECO:0000303" key="14">
    <source>
    </source>
</evidence>
<evidence type="ECO:0000303" key="15">
    <source>
    </source>
</evidence>
<evidence type="ECO:0000303" key="16">
    <source>
    </source>
</evidence>
<evidence type="ECO:0000305" key="17"/>
<keyword id="KW-0025">Alternative splicing</keyword>
<keyword id="KW-0238">DNA-binding</keyword>
<keyword id="KW-0479">Metal-binding</keyword>
<keyword id="KW-0539">Nucleus</keyword>
<keyword id="KW-1267">Proteomics identification</keyword>
<keyword id="KW-0675">Receptor</keyword>
<keyword id="KW-1185">Reference proteome</keyword>
<keyword id="KW-0804">Transcription</keyword>
<keyword id="KW-0805">Transcription regulation</keyword>
<keyword id="KW-0862">Zinc</keyword>
<keyword id="KW-0863">Zinc-finger</keyword>
<protein>
    <recommendedName>
        <fullName>Nuclear receptor subfamily 6 group A member 1</fullName>
    </recommendedName>
    <alternativeName>
        <fullName evidence="13">Germ cell nuclear factor</fullName>
        <shortName evidence="13">GCNF</shortName>
        <shortName evidence="13">hGCNF</shortName>
    </alternativeName>
    <alternativeName>
        <fullName>Retinoid receptor-related testis-specific receptor</fullName>
        <shortName>RTR</shortName>
        <shortName>hRTR</shortName>
    </alternativeName>
</protein>
<accession>Q15406</accession>
<accession>O00551</accession>
<accession>O00603</accession>
<accession>Q5T6F4</accession>
<accession>Q8NHQ0</accession>
<accession>Q92898</accession>
<accession>Q99802</accession>
<gene>
    <name type="primary">NR6A1</name>
    <name evidence="13" type="synonym">GCNF</name>
</gene>
<organism>
    <name type="scientific">Homo sapiens</name>
    <name type="common">Human</name>
    <dbReference type="NCBI Taxonomy" id="9606"/>
    <lineage>
        <taxon>Eukaryota</taxon>
        <taxon>Metazoa</taxon>
        <taxon>Chordata</taxon>
        <taxon>Craniata</taxon>
        <taxon>Vertebrata</taxon>
        <taxon>Euteleostomi</taxon>
        <taxon>Mammalia</taxon>
        <taxon>Eutheria</taxon>
        <taxon>Euarchontoglires</taxon>
        <taxon>Primates</taxon>
        <taxon>Haplorrhini</taxon>
        <taxon>Catarrhini</taxon>
        <taxon>Hominidae</taxon>
        <taxon>Homo</taxon>
    </lineage>
</organism>